<accession>Q9SKN6</accession>
<accession>F4IIN4</accession>
<dbReference type="EMBL" id="AC006283">
    <property type="protein sequence ID" value="AAD20691.1"/>
    <property type="status" value="ALT_SEQ"/>
    <property type="molecule type" value="Genomic_DNA"/>
</dbReference>
<dbReference type="EMBL" id="CP002685">
    <property type="protein sequence ID" value="AEC08109.1"/>
    <property type="molecule type" value="Genomic_DNA"/>
</dbReference>
<dbReference type="PIR" id="F84683">
    <property type="entry name" value="F84683"/>
</dbReference>
<dbReference type="RefSeq" id="NP_180401.2">
    <property type="nucleotide sequence ID" value="NM_128393.3"/>
</dbReference>
<dbReference type="SMR" id="Q9SKN6"/>
<dbReference type="FunCoup" id="Q9SKN6">
    <property type="interactions" value="3"/>
</dbReference>
<dbReference type="STRING" id="3702.Q9SKN6"/>
<dbReference type="PaxDb" id="3702-AT2G28340.1"/>
<dbReference type="ProteomicsDB" id="230447"/>
<dbReference type="EnsemblPlants" id="AT2G28340.1">
    <property type="protein sequence ID" value="AT2G28340.1"/>
    <property type="gene ID" value="AT2G28340"/>
</dbReference>
<dbReference type="GeneID" id="817381"/>
<dbReference type="Gramene" id="AT2G28340.1">
    <property type="protein sequence ID" value="AT2G28340.1"/>
    <property type="gene ID" value="AT2G28340"/>
</dbReference>
<dbReference type="KEGG" id="ath:AT2G28340"/>
<dbReference type="Araport" id="AT2G28340"/>
<dbReference type="TAIR" id="AT2G28340">
    <property type="gene designation" value="GATA13"/>
</dbReference>
<dbReference type="eggNOG" id="KOG1601">
    <property type="taxonomic scope" value="Eukaryota"/>
</dbReference>
<dbReference type="HOGENOM" id="CLU_045755_2_1_1"/>
<dbReference type="InParanoid" id="Q9SKN6"/>
<dbReference type="OMA" id="PRSDCTD"/>
<dbReference type="PRO" id="PR:Q9SKN6"/>
<dbReference type="Proteomes" id="UP000006548">
    <property type="component" value="Chromosome 2"/>
</dbReference>
<dbReference type="ExpressionAtlas" id="Q9SKN6">
    <property type="expression patterns" value="baseline and differential"/>
</dbReference>
<dbReference type="GO" id="GO:0005634">
    <property type="term" value="C:nucleus"/>
    <property type="evidence" value="ECO:0007669"/>
    <property type="project" value="UniProtKB-SubCell"/>
</dbReference>
<dbReference type="GO" id="GO:0003700">
    <property type="term" value="F:DNA-binding transcription factor activity"/>
    <property type="evidence" value="ECO:0000250"/>
    <property type="project" value="TAIR"/>
</dbReference>
<dbReference type="GO" id="GO:0043565">
    <property type="term" value="F:sequence-specific DNA binding"/>
    <property type="evidence" value="ECO:0007669"/>
    <property type="project" value="InterPro"/>
</dbReference>
<dbReference type="GO" id="GO:0008270">
    <property type="term" value="F:zinc ion binding"/>
    <property type="evidence" value="ECO:0007669"/>
    <property type="project" value="UniProtKB-KW"/>
</dbReference>
<dbReference type="CDD" id="cd00202">
    <property type="entry name" value="ZnF_GATA"/>
    <property type="match status" value="1"/>
</dbReference>
<dbReference type="FunFam" id="3.30.50.10:FF:000025">
    <property type="entry name" value="GATA transcription factor"/>
    <property type="match status" value="1"/>
</dbReference>
<dbReference type="Gene3D" id="3.30.50.10">
    <property type="entry name" value="Erythroid Transcription Factor GATA-1, subunit A"/>
    <property type="match status" value="1"/>
</dbReference>
<dbReference type="InterPro" id="IPR051140">
    <property type="entry name" value="GATA_TF"/>
</dbReference>
<dbReference type="InterPro" id="IPR000679">
    <property type="entry name" value="Znf_GATA"/>
</dbReference>
<dbReference type="InterPro" id="IPR013088">
    <property type="entry name" value="Znf_NHR/GATA"/>
</dbReference>
<dbReference type="PANTHER" id="PTHR45658">
    <property type="entry name" value="GATA TRANSCRIPTION FACTOR"/>
    <property type="match status" value="1"/>
</dbReference>
<dbReference type="PANTHER" id="PTHR45658:SF154">
    <property type="entry name" value="GATA TRANSCRIPTION FACTOR 10-RELATED"/>
    <property type="match status" value="1"/>
</dbReference>
<dbReference type="Pfam" id="PF00320">
    <property type="entry name" value="GATA"/>
    <property type="match status" value="1"/>
</dbReference>
<dbReference type="SMART" id="SM00401">
    <property type="entry name" value="ZnF_GATA"/>
    <property type="match status" value="1"/>
</dbReference>
<dbReference type="SUPFAM" id="SSF57716">
    <property type="entry name" value="Glucocorticoid receptor-like (DNA-binding domain)"/>
    <property type="match status" value="1"/>
</dbReference>
<dbReference type="PROSITE" id="PS00344">
    <property type="entry name" value="GATA_ZN_FINGER_1"/>
    <property type="match status" value="1"/>
</dbReference>
<dbReference type="PROSITE" id="PS50114">
    <property type="entry name" value="GATA_ZN_FINGER_2"/>
    <property type="match status" value="1"/>
</dbReference>
<sequence>MNNDLWLPEEDFKGLPDNFLDNLVDPTNDVSVEDIETGDDEGDWDAKFQKLVPPPLDELMSLSYEFTCNGQRVQVQKHVPILKQSSSSEVFSTVDNSPPNVKVSKLLQSLSPVSVLKNTNGSGSPQNPNGDQKLAFLVKGIRSKRKRPTLLRVTFLKSFLLEMSQQFAPDESESSEISALKKRKKNKSRRLKCTHCETTTTPQWREGPNGRKTLCNACGIRFRSGRLVLEYRPAASPTFIPTVHSNLHKKIIYMRMKDNDQFDTRKIRAETSGPETRSRLRNFGRPMSYGQ</sequence>
<comment type="function">
    <text evidence="1">Transcriptional activator that specifically binds 5'-GATA-3' or 5'-GAT-3' motifs within gene promoters. May be involved in the regulation of some light-responsive genes (By similarity).</text>
</comment>
<comment type="subcellular location">
    <subcellularLocation>
        <location evidence="4">Nucleus</location>
    </subcellularLocation>
</comment>
<comment type="similarity">
    <text evidence="4">Belongs to the type IV zinc-finger family. Class A subfamily.</text>
</comment>
<comment type="sequence caution" evidence="4">
    <conflict type="erroneous gene model prediction">
        <sequence resource="EMBL-CDS" id="AAD20691"/>
    </conflict>
</comment>
<name>GAT13_ARATH</name>
<proteinExistence type="inferred from homology"/>
<feature type="chain" id="PRO_0000083436" description="Putative GATA transcription factor 13">
    <location>
        <begin position="1"/>
        <end position="291"/>
    </location>
</feature>
<feature type="zinc finger region" description="GATA-type" evidence="2">
    <location>
        <begin position="187"/>
        <end position="241"/>
    </location>
</feature>
<feature type="region of interest" description="Disordered" evidence="3">
    <location>
        <begin position="271"/>
        <end position="291"/>
    </location>
</feature>
<organism>
    <name type="scientific">Arabidopsis thaliana</name>
    <name type="common">Mouse-ear cress</name>
    <dbReference type="NCBI Taxonomy" id="3702"/>
    <lineage>
        <taxon>Eukaryota</taxon>
        <taxon>Viridiplantae</taxon>
        <taxon>Streptophyta</taxon>
        <taxon>Embryophyta</taxon>
        <taxon>Tracheophyta</taxon>
        <taxon>Spermatophyta</taxon>
        <taxon>Magnoliopsida</taxon>
        <taxon>eudicotyledons</taxon>
        <taxon>Gunneridae</taxon>
        <taxon>Pentapetalae</taxon>
        <taxon>rosids</taxon>
        <taxon>malvids</taxon>
        <taxon>Brassicales</taxon>
        <taxon>Brassicaceae</taxon>
        <taxon>Camelineae</taxon>
        <taxon>Arabidopsis</taxon>
    </lineage>
</organism>
<evidence type="ECO:0000250" key="1"/>
<evidence type="ECO:0000255" key="2">
    <source>
        <dbReference type="PROSITE-ProRule" id="PRU00094"/>
    </source>
</evidence>
<evidence type="ECO:0000256" key="3">
    <source>
        <dbReference type="SAM" id="MobiDB-lite"/>
    </source>
</evidence>
<evidence type="ECO:0000305" key="4"/>
<keyword id="KW-0010">Activator</keyword>
<keyword id="KW-0238">DNA-binding</keyword>
<keyword id="KW-0479">Metal-binding</keyword>
<keyword id="KW-0539">Nucleus</keyword>
<keyword id="KW-1185">Reference proteome</keyword>
<keyword id="KW-0804">Transcription</keyword>
<keyword id="KW-0805">Transcription regulation</keyword>
<keyword id="KW-0862">Zinc</keyword>
<keyword id="KW-0863">Zinc-finger</keyword>
<gene>
    <name type="primary">GATA13</name>
    <name type="ordered locus">At2g28340</name>
    <name type="ORF">T1B3.14</name>
</gene>
<reference key="1">
    <citation type="journal article" date="1999" name="Nature">
        <title>Sequence and analysis of chromosome 2 of the plant Arabidopsis thaliana.</title>
        <authorList>
            <person name="Lin X."/>
            <person name="Kaul S."/>
            <person name="Rounsley S.D."/>
            <person name="Shea T.P."/>
            <person name="Benito M.-I."/>
            <person name="Town C.D."/>
            <person name="Fujii C.Y."/>
            <person name="Mason T.M."/>
            <person name="Bowman C.L."/>
            <person name="Barnstead M.E."/>
            <person name="Feldblyum T.V."/>
            <person name="Buell C.R."/>
            <person name="Ketchum K.A."/>
            <person name="Lee J.J."/>
            <person name="Ronning C.M."/>
            <person name="Koo H.L."/>
            <person name="Moffat K.S."/>
            <person name="Cronin L.A."/>
            <person name="Shen M."/>
            <person name="Pai G."/>
            <person name="Van Aken S."/>
            <person name="Umayam L."/>
            <person name="Tallon L.J."/>
            <person name="Gill J.E."/>
            <person name="Adams M.D."/>
            <person name="Carrera A.J."/>
            <person name="Creasy T.H."/>
            <person name="Goodman H.M."/>
            <person name="Somerville C.R."/>
            <person name="Copenhaver G.P."/>
            <person name="Preuss D."/>
            <person name="Nierman W.C."/>
            <person name="White O."/>
            <person name="Eisen J.A."/>
            <person name="Salzberg S.L."/>
            <person name="Fraser C.M."/>
            <person name="Venter J.C."/>
        </authorList>
    </citation>
    <scope>NUCLEOTIDE SEQUENCE [LARGE SCALE GENOMIC DNA]</scope>
    <source>
        <strain>cv. Columbia</strain>
    </source>
</reference>
<reference key="2">
    <citation type="journal article" date="2017" name="Plant J.">
        <title>Araport11: a complete reannotation of the Arabidopsis thaliana reference genome.</title>
        <authorList>
            <person name="Cheng C.Y."/>
            <person name="Krishnakumar V."/>
            <person name="Chan A.P."/>
            <person name="Thibaud-Nissen F."/>
            <person name="Schobel S."/>
            <person name="Town C.D."/>
        </authorList>
    </citation>
    <scope>GENOME REANNOTATION</scope>
    <source>
        <strain>cv. Columbia</strain>
    </source>
</reference>
<reference key="3">
    <citation type="journal article" date="2004" name="Plant Physiol.">
        <title>The GATA family of transcription factors in Arabidopsis and rice.</title>
        <authorList>
            <person name="Reyes J.C."/>
            <person name="Muro-Pastor M.I."/>
            <person name="Florencio F.J."/>
        </authorList>
    </citation>
    <scope>GENE FAMILY ORGANIZATION</scope>
</reference>
<protein>
    <recommendedName>
        <fullName>Putative GATA transcription factor 13</fullName>
    </recommendedName>
</protein>